<accession>P0DRJ1</accession>
<organism>
    <name type="scientific">Bombus ignitus</name>
    <name type="common">Bumblebee</name>
    <dbReference type="NCBI Taxonomy" id="130704"/>
    <lineage>
        <taxon>Eukaryota</taxon>
        <taxon>Metazoa</taxon>
        <taxon>Ecdysozoa</taxon>
        <taxon>Arthropoda</taxon>
        <taxon>Hexapoda</taxon>
        <taxon>Insecta</taxon>
        <taxon>Pterygota</taxon>
        <taxon>Neoptera</taxon>
        <taxon>Endopterygota</taxon>
        <taxon>Hymenoptera</taxon>
        <taxon>Apocrita</taxon>
        <taxon>Aculeata</taxon>
        <taxon>Apoidea</taxon>
        <taxon>Anthophila</taxon>
        <taxon>Apidae</taxon>
        <taxon>Bombus</taxon>
        <taxon>Bombus</taxon>
    </lineage>
</organism>
<name>TILI_BOMIG</name>
<sequence>MKMKLLQVHFVLLVSSSFLLGYTGMVTAAILSRPQVVFVEDTCRENEIFSQCQASPNCEKSCDNIDIWESVPCIQTKSCVSGCICEDGYVRDKNQGVCILENSCPRVRH</sequence>
<protein>
    <recommendedName>
        <fullName evidence="5">Serine protease inhibitor</fullName>
        <shortName evidence="5">BiSPI</shortName>
    </recommendedName>
</protein>
<evidence type="ECO:0000250" key="1">
    <source>
        <dbReference type="UniProtKB" id="A0A2R4SV19"/>
    </source>
</evidence>
<evidence type="ECO:0000250" key="2">
    <source>
        <dbReference type="UniProtKB" id="P07851"/>
    </source>
</evidence>
<evidence type="ECO:0000255" key="3"/>
<evidence type="ECO:0000269" key="4">
    <source>
    </source>
</evidence>
<evidence type="ECO:0000303" key="5">
    <source>
    </source>
</evidence>
<evidence type="ECO:0000305" key="6"/>
<evidence type="ECO:0000305" key="7">
    <source>
    </source>
</evidence>
<dbReference type="EMBL" id="ON131729">
    <property type="protein sequence ID" value="UTN00453.1"/>
    <property type="molecule type" value="mRNA"/>
</dbReference>
<dbReference type="EMBL" id="ON131730">
    <property type="protein sequence ID" value="UTN00454.1"/>
    <property type="molecule type" value="Genomic_DNA"/>
</dbReference>
<comment type="function">
    <text evidence="4">Dual role peptide that functions as a broad-spectrum antimicrobial peptide and antifibrinolytic toxin. Inhibits trypsin (IC(50)=375 nM), plasmin (IC(50)=2140 nM), and microbial serine proteases (subtilisin A (IC(50)=294 nM) and proteinase K (IC(50)=459 nM)). Exhibits antifibrinolytic activity by binding and inhibiting plasmin. Does not inhibit chymotrypsin, elastase or thrombin. Binds to microbial cell wall carbohydrates (LPS, mannan and N-acetyl-D-glucosamine) and shows antimicrobial activity (MIC=4.1 uM against B.thuringiensis, MIC=4.95 uM against E.coli, MIC=9.6 uM against the fungus B.bassiana). Does not show hemolytic activity.</text>
</comment>
<comment type="subcellular location">
    <subcellularLocation>
        <location evidence="4">Secreted</location>
    </subcellularLocation>
</comment>
<comment type="tissue specificity">
    <text evidence="4">Ubiquitously expressed (at protein level), including in venom glands. Found more precisely in the epidermis, fat body, gut, muscle, and venom of worker bees.</text>
</comment>
<comment type="similarity">
    <text evidence="6">Belongs to the serine protease inhibitor-like (TIL domain-containing) family.</text>
</comment>
<feature type="signal peptide" evidence="3">
    <location>
        <begin position="1"/>
        <end position="28"/>
    </location>
</feature>
<feature type="chain" id="PRO_0000462305" description="Serine protease inhibitor" evidence="7">
    <location>
        <begin position="29"/>
        <end position="109"/>
    </location>
</feature>
<feature type="domain" description="TIL" evidence="6">
    <location>
        <begin position="43"/>
        <end position="104"/>
    </location>
</feature>
<feature type="site" description="Reactive bond" evidence="1">
    <location>
        <begin position="77"/>
        <end position="78"/>
    </location>
</feature>
<feature type="disulfide bond" evidence="2">
    <location>
        <begin position="43"/>
        <end position="83"/>
    </location>
</feature>
<feature type="disulfide bond" evidence="2">
    <location>
        <begin position="52"/>
        <end position="79"/>
    </location>
</feature>
<feature type="disulfide bond" evidence="2">
    <location>
        <begin position="58"/>
        <end position="73"/>
    </location>
</feature>
<feature type="disulfide bond" evidence="2">
    <location>
        <begin position="62"/>
        <end position="104"/>
    </location>
</feature>
<feature type="disulfide bond" evidence="2">
    <location>
        <begin position="85"/>
        <end position="98"/>
    </location>
</feature>
<proteinExistence type="evidence at protein level"/>
<reference key="1">
    <citation type="journal article" date="2022" name="Dev. Comp. Immunol.">
        <title>Dual function of a bumblebee (Bombus ignitus) serine protease inhibitor that acts as a microbicidal peptide and anti-fibrinolytic venom toxin.</title>
        <authorList>
            <person name="Kim B.Y."/>
            <person name="Kim Y.H."/>
            <person name="Park M.J."/>
            <person name="Yoon H.J."/>
            <person name="Lee K.Y."/>
            <person name="Kim H.K."/>
            <person name="Lee K.S."/>
            <person name="Jin B.R."/>
        </authorList>
    </citation>
    <scope>NUCLEOTIDE SEQUENCE [GENOMIC DNA / MRNA]</scope>
    <scope>TISSUE SPECIFICITY</scope>
    <scope>SUBCELLULAR LOCATION</scope>
    <scope>RECOMBINANT EXPRESSION</scope>
    <source>
        <tissue>Venom gland</tissue>
    </source>
</reference>
<keyword id="KW-0044">Antibiotic</keyword>
<keyword id="KW-0929">Antimicrobial</keyword>
<keyword id="KW-1015">Disulfide bond</keyword>
<keyword id="KW-0295">Fungicide</keyword>
<keyword id="KW-1199">Hemostasis impairing toxin</keyword>
<keyword id="KW-0646">Protease inhibitor</keyword>
<keyword id="KW-0964">Secreted</keyword>
<keyword id="KW-0722">Serine protease inhibitor</keyword>
<keyword id="KW-0732">Signal</keyword>
<keyword id="KW-0800">Toxin</keyword>